<comment type="function">
    <text>Light-harvesting photosynthetic bile pigment-protein from the phycobiliprotein complex.</text>
</comment>
<comment type="biophysicochemical properties">
    <absorption>
        <max>~550 nm</max>
    </absorption>
</comment>
<comment type="subunit">
    <text evidence="1">Heterodimer of an alpha and a beta chain.</text>
</comment>
<comment type="subcellular location">
    <subcellularLocation>
        <location evidence="1">Cellular thylakoid membrane</location>
        <topology evidence="1">Peripheral membrane protein</topology>
        <orientation evidence="1">Cytoplasmic side</orientation>
    </subcellularLocation>
    <text evidence="1">Forms the periphery of the phycobilisome rod.</text>
</comment>
<comment type="PTM">
    <text>Contains one covalently linked bilin chromophore.</text>
</comment>
<comment type="similarity">
    <text evidence="2">Belongs to the phycobiliprotein family.</text>
</comment>
<reference key="1">
    <citation type="journal article" date="1992" name="J. Bacteriol.">
        <title>Genes encoding the phycobilisome rod substructure are clustered on the Anabaena chromosome: characterization of the phycoerythrocyanin operon.</title>
        <authorList>
            <person name="Swanson R.V."/>
            <person name="de Lorimier R."/>
            <person name="Glazer A.N."/>
        </authorList>
    </citation>
    <scope>NUCLEOTIDE SEQUENCE [GENOMIC DNA]</scope>
</reference>
<reference key="2">
    <citation type="journal article" date="2001" name="DNA Res.">
        <title>Complete genomic sequence of the filamentous nitrogen-fixing cyanobacterium Anabaena sp. strain PCC 7120.</title>
        <authorList>
            <person name="Kaneko T."/>
            <person name="Nakamura Y."/>
            <person name="Wolk C.P."/>
            <person name="Kuritz T."/>
            <person name="Sasamoto S."/>
            <person name="Watanabe A."/>
            <person name="Iriguchi M."/>
            <person name="Ishikawa A."/>
            <person name="Kawashima K."/>
            <person name="Kimura T."/>
            <person name="Kishida Y."/>
            <person name="Kohara M."/>
            <person name="Matsumoto M."/>
            <person name="Matsuno A."/>
            <person name="Muraki A."/>
            <person name="Nakazaki N."/>
            <person name="Shimpo S."/>
            <person name="Sugimoto M."/>
            <person name="Takazawa M."/>
            <person name="Yamada M."/>
            <person name="Yasuda M."/>
            <person name="Tabata S."/>
        </authorList>
    </citation>
    <scope>NUCLEOTIDE SEQUENCE [LARGE SCALE GENOMIC DNA]</scope>
    <source>
        <strain>PCC 7120 / SAG 25.82 / UTEX 2576</strain>
    </source>
</reference>
<reference key="3">
    <citation type="journal article" date="1987" name="J. Am. Chem. Soc.">
        <title>Chromopeptides from phycoerythrocyanin. Structure and linkage of the three bilin groups.</title>
        <authorList>
            <person name="Bishop J.E."/>
            <person name="Rapoport H."/>
            <person name="Klotz A.V."/>
            <person name="Chan C.F."/>
            <person name="Glazer A.N."/>
            <person name="Fueglistaller P."/>
            <person name="Zuber H."/>
        </authorList>
    </citation>
    <scope>CHROMOPHORE STRUCTURE</scope>
    <scope>CHROMOPHORE BINDING AT CYS-84</scope>
</reference>
<protein>
    <recommendedName>
        <fullName>Phycoerythrocyanin alpha chain</fullName>
    </recommendedName>
</protein>
<proteinExistence type="evidence at protein level"/>
<organism>
    <name type="scientific">Nostoc sp. (strain PCC 7120 / SAG 25.82 / UTEX 2576)</name>
    <dbReference type="NCBI Taxonomy" id="103690"/>
    <lineage>
        <taxon>Bacteria</taxon>
        <taxon>Bacillati</taxon>
        <taxon>Cyanobacteriota</taxon>
        <taxon>Cyanophyceae</taxon>
        <taxon>Nostocales</taxon>
        <taxon>Nostocaceae</taxon>
        <taxon>Nostoc</taxon>
    </lineage>
</organism>
<sequence length="162" mass="17455">MKTPLTEAISAADVRGSYLSNTEMQAVFGRFNRARAGLAAAQAFSNNGKKWAEAAANHVYQKFPYTTQMSGPQYASTPEGKSKCVRDIDHYLRTISYCCVVGGTGPLDEYVVSGLSELNSALGLSPSWYVAALEFVRDNHGLNGDVAGEANIYLNYAINALS</sequence>
<accession>P35796</accession>
<dbReference type="EMBL" id="AF178757">
    <property type="protein sequence ID" value="AAA22017.1"/>
    <property type="molecule type" value="Genomic_DNA"/>
</dbReference>
<dbReference type="EMBL" id="BA000019">
    <property type="protein sequence ID" value="BAB72482.1"/>
    <property type="molecule type" value="Genomic_DNA"/>
</dbReference>
<dbReference type="PIR" id="AC1872">
    <property type="entry name" value="AC1872"/>
</dbReference>
<dbReference type="PIR" id="B41841">
    <property type="entry name" value="B41841"/>
</dbReference>
<dbReference type="RefSeq" id="WP_010994700.1">
    <property type="nucleotide sequence ID" value="NZ_RSCN01000024.1"/>
</dbReference>
<dbReference type="SMR" id="P35796"/>
<dbReference type="STRING" id="103690.gene:10492535"/>
<dbReference type="KEGG" id="ana:alr0524"/>
<dbReference type="eggNOG" id="ENOG502Z930">
    <property type="taxonomic scope" value="Bacteria"/>
</dbReference>
<dbReference type="OrthoDB" id="466183at2"/>
<dbReference type="Proteomes" id="UP000002483">
    <property type="component" value="Chromosome"/>
</dbReference>
<dbReference type="GO" id="GO:0030089">
    <property type="term" value="C:phycobilisome"/>
    <property type="evidence" value="ECO:0007669"/>
    <property type="project" value="UniProtKB-KW"/>
</dbReference>
<dbReference type="GO" id="GO:0031676">
    <property type="term" value="C:plasma membrane-derived thylakoid membrane"/>
    <property type="evidence" value="ECO:0007669"/>
    <property type="project" value="UniProtKB-SubCell"/>
</dbReference>
<dbReference type="GO" id="GO:0015979">
    <property type="term" value="P:photosynthesis"/>
    <property type="evidence" value="ECO:0007669"/>
    <property type="project" value="UniProtKB-KW"/>
</dbReference>
<dbReference type="Gene3D" id="1.10.490.20">
    <property type="entry name" value="Phycocyanins"/>
    <property type="match status" value="1"/>
</dbReference>
<dbReference type="InterPro" id="IPR009050">
    <property type="entry name" value="Globin-like_sf"/>
</dbReference>
<dbReference type="InterPro" id="IPR012128">
    <property type="entry name" value="Phycobilisome_asu/bsu"/>
</dbReference>
<dbReference type="InterPro" id="IPR038719">
    <property type="entry name" value="Phycobilisome_asu/bsu_sf"/>
</dbReference>
<dbReference type="PANTHER" id="PTHR34011:SF4">
    <property type="entry name" value="C-PHYCOCYANIN ALPHA SUBUNIT"/>
    <property type="match status" value="1"/>
</dbReference>
<dbReference type="PANTHER" id="PTHR34011">
    <property type="entry name" value="PHYCOBILISOME 32.1 KDA LINKER POLYPEPTIDE, PHYCOCYANIN-ASSOCIATED, ROD 2-RELATED"/>
    <property type="match status" value="1"/>
</dbReference>
<dbReference type="Pfam" id="PF00502">
    <property type="entry name" value="Phycobilisome"/>
    <property type="match status" value="1"/>
</dbReference>
<dbReference type="PIRSF" id="PIRSF000081">
    <property type="entry name" value="Phycocyanin"/>
    <property type="match status" value="1"/>
</dbReference>
<dbReference type="SUPFAM" id="SSF46458">
    <property type="entry name" value="Globin-like"/>
    <property type="match status" value="1"/>
</dbReference>
<keyword id="KW-0042">Antenna complex</keyword>
<keyword id="KW-0089">Bile pigment</keyword>
<keyword id="KW-0157">Chromophore</keyword>
<keyword id="KW-0249">Electron transport</keyword>
<keyword id="KW-0472">Membrane</keyword>
<keyword id="KW-0602">Photosynthesis</keyword>
<keyword id="KW-0605">Phycobilisome</keyword>
<keyword id="KW-1185">Reference proteome</keyword>
<keyword id="KW-0793">Thylakoid</keyword>
<keyword id="KW-0813">Transport</keyword>
<name>PHEA_NOSS1</name>
<gene>
    <name type="primary">pecA</name>
    <name type="ordered locus">alr0524</name>
</gene>
<evidence type="ECO:0000250" key="1"/>
<evidence type="ECO:0000305" key="2"/>
<feature type="chain" id="PRO_0000199168" description="Phycoerythrocyanin alpha chain">
    <location>
        <begin position="1"/>
        <end position="162"/>
    </location>
</feature>
<feature type="binding site" description="covalent">
    <location>
        <position position="84"/>
    </location>
    <ligand>
        <name>(15Z)-phycoviolobilin</name>
        <dbReference type="ChEBI" id="CHEBI:189063"/>
    </ligand>
</feature>